<feature type="chain" id="PRO_0000263878" description="Translation initiation factor IF-1">
    <location>
        <begin position="1"/>
        <end position="72"/>
    </location>
</feature>
<feature type="domain" description="S1-like" evidence="1">
    <location>
        <begin position="1"/>
        <end position="72"/>
    </location>
</feature>
<protein>
    <recommendedName>
        <fullName evidence="1">Translation initiation factor IF-1</fullName>
    </recommendedName>
</protein>
<reference key="1">
    <citation type="journal article" date="2006" name="Lancet">
        <title>Complete genome sequence of USA300, an epidemic clone of community-acquired meticillin-resistant Staphylococcus aureus.</title>
        <authorList>
            <person name="Diep B.A."/>
            <person name="Gill S.R."/>
            <person name="Chang R.F."/>
            <person name="Phan T.H."/>
            <person name="Chen J.H."/>
            <person name="Davidson M.G."/>
            <person name="Lin F."/>
            <person name="Lin J."/>
            <person name="Carleton H.A."/>
            <person name="Mongodin E.F."/>
            <person name="Sensabaugh G.F."/>
            <person name="Perdreau-Remington F."/>
        </authorList>
    </citation>
    <scope>NUCLEOTIDE SEQUENCE [LARGE SCALE GENOMIC DNA]</scope>
    <source>
        <strain>USA300</strain>
    </source>
</reference>
<dbReference type="EMBL" id="CP000255">
    <property type="protein sequence ID" value="ABD21567.1"/>
    <property type="molecule type" value="Genomic_DNA"/>
</dbReference>
<dbReference type="RefSeq" id="WP_001118443.1">
    <property type="nucleotide sequence ID" value="NZ_CP027476.1"/>
</dbReference>
<dbReference type="SMR" id="Q2FER1"/>
<dbReference type="GeneID" id="98346540"/>
<dbReference type="KEGG" id="saa:SAUSA300_2182"/>
<dbReference type="HOGENOM" id="CLU_151267_1_0_9"/>
<dbReference type="OMA" id="EGHQCLC"/>
<dbReference type="Proteomes" id="UP000001939">
    <property type="component" value="Chromosome"/>
</dbReference>
<dbReference type="GO" id="GO:0005829">
    <property type="term" value="C:cytosol"/>
    <property type="evidence" value="ECO:0007669"/>
    <property type="project" value="TreeGrafter"/>
</dbReference>
<dbReference type="GO" id="GO:0043022">
    <property type="term" value="F:ribosome binding"/>
    <property type="evidence" value="ECO:0007669"/>
    <property type="project" value="UniProtKB-UniRule"/>
</dbReference>
<dbReference type="GO" id="GO:0019843">
    <property type="term" value="F:rRNA binding"/>
    <property type="evidence" value="ECO:0007669"/>
    <property type="project" value="UniProtKB-UniRule"/>
</dbReference>
<dbReference type="GO" id="GO:0003743">
    <property type="term" value="F:translation initiation factor activity"/>
    <property type="evidence" value="ECO:0007669"/>
    <property type="project" value="UniProtKB-UniRule"/>
</dbReference>
<dbReference type="CDD" id="cd04451">
    <property type="entry name" value="S1_IF1"/>
    <property type="match status" value="1"/>
</dbReference>
<dbReference type="FunFam" id="2.40.50.140:FF:000002">
    <property type="entry name" value="Translation initiation factor IF-1"/>
    <property type="match status" value="1"/>
</dbReference>
<dbReference type="Gene3D" id="2.40.50.140">
    <property type="entry name" value="Nucleic acid-binding proteins"/>
    <property type="match status" value="1"/>
</dbReference>
<dbReference type="HAMAP" id="MF_00075">
    <property type="entry name" value="IF_1"/>
    <property type="match status" value="1"/>
</dbReference>
<dbReference type="InterPro" id="IPR012340">
    <property type="entry name" value="NA-bd_OB-fold"/>
</dbReference>
<dbReference type="InterPro" id="IPR006196">
    <property type="entry name" value="RNA-binding_domain_S1_IF1"/>
</dbReference>
<dbReference type="InterPro" id="IPR003029">
    <property type="entry name" value="S1_domain"/>
</dbReference>
<dbReference type="InterPro" id="IPR004368">
    <property type="entry name" value="TIF_IF1"/>
</dbReference>
<dbReference type="NCBIfam" id="TIGR00008">
    <property type="entry name" value="infA"/>
    <property type="match status" value="1"/>
</dbReference>
<dbReference type="PANTHER" id="PTHR33370">
    <property type="entry name" value="TRANSLATION INITIATION FACTOR IF-1, CHLOROPLASTIC"/>
    <property type="match status" value="1"/>
</dbReference>
<dbReference type="PANTHER" id="PTHR33370:SF1">
    <property type="entry name" value="TRANSLATION INITIATION FACTOR IF-1, CHLOROPLASTIC"/>
    <property type="match status" value="1"/>
</dbReference>
<dbReference type="Pfam" id="PF01176">
    <property type="entry name" value="eIF-1a"/>
    <property type="match status" value="1"/>
</dbReference>
<dbReference type="SMART" id="SM00316">
    <property type="entry name" value="S1"/>
    <property type="match status" value="1"/>
</dbReference>
<dbReference type="SUPFAM" id="SSF50249">
    <property type="entry name" value="Nucleic acid-binding proteins"/>
    <property type="match status" value="1"/>
</dbReference>
<dbReference type="PROSITE" id="PS50832">
    <property type="entry name" value="S1_IF1_TYPE"/>
    <property type="match status" value="1"/>
</dbReference>
<sequence>MAKQDVIELEGTVLDTLPNAMFKVELENGHEILAHVSGKIRMNYIRILPGDKVTVEMSPYDLTRGRITYRYK</sequence>
<name>IF1_STAA3</name>
<keyword id="KW-0963">Cytoplasm</keyword>
<keyword id="KW-0396">Initiation factor</keyword>
<keyword id="KW-0648">Protein biosynthesis</keyword>
<keyword id="KW-0694">RNA-binding</keyword>
<keyword id="KW-0699">rRNA-binding</keyword>
<organism>
    <name type="scientific">Staphylococcus aureus (strain USA300)</name>
    <dbReference type="NCBI Taxonomy" id="367830"/>
    <lineage>
        <taxon>Bacteria</taxon>
        <taxon>Bacillati</taxon>
        <taxon>Bacillota</taxon>
        <taxon>Bacilli</taxon>
        <taxon>Bacillales</taxon>
        <taxon>Staphylococcaceae</taxon>
        <taxon>Staphylococcus</taxon>
    </lineage>
</organism>
<gene>
    <name evidence="1" type="primary">infA</name>
    <name type="ordered locus">SAUSA300_2182</name>
</gene>
<evidence type="ECO:0000255" key="1">
    <source>
        <dbReference type="HAMAP-Rule" id="MF_00075"/>
    </source>
</evidence>
<accession>Q2FER1</accession>
<comment type="function">
    <text evidence="1">One of the essential components for the initiation of protein synthesis. Stabilizes the binding of IF-2 and IF-3 on the 30S subunit to which N-formylmethionyl-tRNA(fMet) subsequently binds. Helps modulate mRNA selection, yielding the 30S pre-initiation complex (PIC). Upon addition of the 50S ribosomal subunit IF-1, IF-2 and IF-3 are released leaving the mature 70S translation initiation complex.</text>
</comment>
<comment type="subunit">
    <text evidence="1">Component of the 30S ribosomal translation pre-initiation complex which assembles on the 30S ribosome in the order IF-2 and IF-3, IF-1 and N-formylmethionyl-tRNA(fMet); mRNA recruitment can occur at any time during PIC assembly.</text>
</comment>
<comment type="subcellular location">
    <subcellularLocation>
        <location evidence="1">Cytoplasm</location>
    </subcellularLocation>
</comment>
<comment type="similarity">
    <text evidence="1">Belongs to the IF-1 family.</text>
</comment>
<proteinExistence type="inferred from homology"/>